<sequence>MKPTTISLLQKCKQEKKRFATITAYDYSFAKLFADEGINVMLVGDSLGMTIQGHDSTLPVTVEDIAYHTRAVRRGAPNCLLLSDLPFMAYATPEQACENAAIVMRAGANMVKIEGGAWLVDTVKMLTERAVPVCGHLGLTPQSVNIFGGYKIQGRGDAGQVLLDDALALEAAGAQLLVLECVPVELAKRVTEALSIPVIGIGAGNVTDGQILVMHDAFGITGGHIPKFAKNFLAEAGDMRAAVQQYMAEVESGVYPGEEHSFH</sequence>
<proteinExistence type="inferred from homology"/>
<accession>Q8ZRR0</accession>
<dbReference type="EC" id="2.1.2.11" evidence="1"/>
<dbReference type="EMBL" id="AE006468">
    <property type="protein sequence ID" value="AAL19146.1"/>
    <property type="molecule type" value="Genomic_DNA"/>
</dbReference>
<dbReference type="RefSeq" id="NP_459187.1">
    <property type="nucleotide sequence ID" value="NC_003197.2"/>
</dbReference>
<dbReference type="RefSeq" id="WP_000805487.1">
    <property type="nucleotide sequence ID" value="NC_003197.2"/>
</dbReference>
<dbReference type="SMR" id="Q8ZRR0"/>
<dbReference type="STRING" id="99287.STM0182"/>
<dbReference type="PaxDb" id="99287-STM0182"/>
<dbReference type="GeneID" id="1251700"/>
<dbReference type="KEGG" id="stm:STM0182"/>
<dbReference type="PATRIC" id="fig|99287.12.peg.192"/>
<dbReference type="HOGENOM" id="CLU_036645_1_0_6"/>
<dbReference type="OMA" id="VLVWTDM"/>
<dbReference type="PhylomeDB" id="Q8ZRR0"/>
<dbReference type="BioCyc" id="SENT99287:STM0182-MONOMER"/>
<dbReference type="UniPathway" id="UPA00028">
    <property type="reaction ID" value="UER00003"/>
</dbReference>
<dbReference type="Proteomes" id="UP000001014">
    <property type="component" value="Chromosome"/>
</dbReference>
<dbReference type="GO" id="GO:0005737">
    <property type="term" value="C:cytoplasm"/>
    <property type="evidence" value="ECO:0000318"/>
    <property type="project" value="GO_Central"/>
</dbReference>
<dbReference type="GO" id="GO:0003864">
    <property type="term" value="F:3-methyl-2-oxobutanoate hydroxymethyltransferase activity"/>
    <property type="evidence" value="ECO:0000318"/>
    <property type="project" value="GO_Central"/>
</dbReference>
<dbReference type="GO" id="GO:0000287">
    <property type="term" value="F:magnesium ion binding"/>
    <property type="evidence" value="ECO:0000318"/>
    <property type="project" value="GO_Central"/>
</dbReference>
<dbReference type="GO" id="GO:0015940">
    <property type="term" value="P:pantothenate biosynthetic process"/>
    <property type="evidence" value="ECO:0000318"/>
    <property type="project" value="GO_Central"/>
</dbReference>
<dbReference type="CDD" id="cd06557">
    <property type="entry name" value="KPHMT-like"/>
    <property type="match status" value="1"/>
</dbReference>
<dbReference type="FunFam" id="3.20.20.60:FF:000003">
    <property type="entry name" value="3-methyl-2-oxobutanoate hydroxymethyltransferase"/>
    <property type="match status" value="1"/>
</dbReference>
<dbReference type="Gene3D" id="3.20.20.60">
    <property type="entry name" value="Phosphoenolpyruvate-binding domains"/>
    <property type="match status" value="1"/>
</dbReference>
<dbReference type="HAMAP" id="MF_00156">
    <property type="entry name" value="PanB"/>
    <property type="match status" value="1"/>
</dbReference>
<dbReference type="InterPro" id="IPR003700">
    <property type="entry name" value="Pantoate_hydroxy_MeTrfase"/>
</dbReference>
<dbReference type="InterPro" id="IPR015813">
    <property type="entry name" value="Pyrv/PenolPyrv_kinase-like_dom"/>
</dbReference>
<dbReference type="InterPro" id="IPR040442">
    <property type="entry name" value="Pyrv_kinase-like_dom_sf"/>
</dbReference>
<dbReference type="NCBIfam" id="TIGR00222">
    <property type="entry name" value="panB"/>
    <property type="match status" value="1"/>
</dbReference>
<dbReference type="NCBIfam" id="NF001452">
    <property type="entry name" value="PRK00311.1"/>
    <property type="match status" value="1"/>
</dbReference>
<dbReference type="PANTHER" id="PTHR20881">
    <property type="entry name" value="3-METHYL-2-OXOBUTANOATE HYDROXYMETHYLTRANSFERASE"/>
    <property type="match status" value="1"/>
</dbReference>
<dbReference type="PANTHER" id="PTHR20881:SF0">
    <property type="entry name" value="3-METHYL-2-OXOBUTANOATE HYDROXYMETHYLTRANSFERASE"/>
    <property type="match status" value="1"/>
</dbReference>
<dbReference type="Pfam" id="PF02548">
    <property type="entry name" value="Pantoate_transf"/>
    <property type="match status" value="1"/>
</dbReference>
<dbReference type="PIRSF" id="PIRSF000388">
    <property type="entry name" value="Pantoate_hydroxy_MeTrfase"/>
    <property type="match status" value="1"/>
</dbReference>
<dbReference type="SUPFAM" id="SSF51621">
    <property type="entry name" value="Phosphoenolpyruvate/pyruvate domain"/>
    <property type="match status" value="1"/>
</dbReference>
<evidence type="ECO:0000255" key="1">
    <source>
        <dbReference type="HAMAP-Rule" id="MF_00156"/>
    </source>
</evidence>
<organism>
    <name type="scientific">Salmonella typhimurium (strain LT2 / SGSC1412 / ATCC 700720)</name>
    <dbReference type="NCBI Taxonomy" id="99287"/>
    <lineage>
        <taxon>Bacteria</taxon>
        <taxon>Pseudomonadati</taxon>
        <taxon>Pseudomonadota</taxon>
        <taxon>Gammaproteobacteria</taxon>
        <taxon>Enterobacterales</taxon>
        <taxon>Enterobacteriaceae</taxon>
        <taxon>Salmonella</taxon>
    </lineage>
</organism>
<keyword id="KW-0963">Cytoplasm</keyword>
<keyword id="KW-0460">Magnesium</keyword>
<keyword id="KW-0479">Metal-binding</keyword>
<keyword id="KW-0566">Pantothenate biosynthesis</keyword>
<keyword id="KW-1185">Reference proteome</keyword>
<keyword id="KW-0808">Transferase</keyword>
<comment type="function">
    <text evidence="1">Catalyzes the reversible reaction in which hydroxymethyl group from 5,10-methylenetetrahydrofolate is transferred onto alpha-ketoisovalerate to form ketopantoate.</text>
</comment>
<comment type="catalytic activity">
    <reaction evidence="1">
        <text>3-methyl-2-oxobutanoate + (6R)-5,10-methylene-5,6,7,8-tetrahydrofolate + H2O = 2-dehydropantoate + (6S)-5,6,7,8-tetrahydrofolate</text>
        <dbReference type="Rhea" id="RHEA:11824"/>
        <dbReference type="ChEBI" id="CHEBI:11561"/>
        <dbReference type="ChEBI" id="CHEBI:11851"/>
        <dbReference type="ChEBI" id="CHEBI:15377"/>
        <dbReference type="ChEBI" id="CHEBI:15636"/>
        <dbReference type="ChEBI" id="CHEBI:57453"/>
        <dbReference type="EC" id="2.1.2.11"/>
    </reaction>
</comment>
<comment type="cofactor">
    <cofactor evidence="1">
        <name>Mg(2+)</name>
        <dbReference type="ChEBI" id="CHEBI:18420"/>
    </cofactor>
    <text evidence="1">Binds 1 Mg(2+) ion per subunit.</text>
</comment>
<comment type="pathway">
    <text evidence="1">Cofactor biosynthesis; (R)-pantothenate biosynthesis; (R)-pantoate from 3-methyl-2-oxobutanoate: step 1/2.</text>
</comment>
<comment type="subunit">
    <text evidence="1">Homodecamer; pentamer of dimers.</text>
</comment>
<comment type="subcellular location">
    <subcellularLocation>
        <location evidence="1">Cytoplasm</location>
    </subcellularLocation>
</comment>
<comment type="similarity">
    <text evidence="1">Belongs to the PanB family.</text>
</comment>
<feature type="chain" id="PRO_0000184885" description="3-methyl-2-oxobutanoate hydroxymethyltransferase">
    <location>
        <begin position="1"/>
        <end position="263"/>
    </location>
</feature>
<feature type="active site" description="Proton acceptor" evidence="1">
    <location>
        <position position="180"/>
    </location>
</feature>
<feature type="binding site" evidence="1">
    <location>
        <begin position="45"/>
        <end position="46"/>
    </location>
    <ligand>
        <name>3-methyl-2-oxobutanoate</name>
        <dbReference type="ChEBI" id="CHEBI:11851"/>
    </ligand>
</feature>
<feature type="binding site" evidence="1">
    <location>
        <position position="45"/>
    </location>
    <ligand>
        <name>Mg(2+)</name>
        <dbReference type="ChEBI" id="CHEBI:18420"/>
    </ligand>
</feature>
<feature type="binding site" evidence="1">
    <location>
        <position position="84"/>
    </location>
    <ligand>
        <name>3-methyl-2-oxobutanoate</name>
        <dbReference type="ChEBI" id="CHEBI:11851"/>
    </ligand>
</feature>
<feature type="binding site" evidence="1">
    <location>
        <position position="84"/>
    </location>
    <ligand>
        <name>Mg(2+)</name>
        <dbReference type="ChEBI" id="CHEBI:18420"/>
    </ligand>
</feature>
<feature type="binding site" evidence="1">
    <location>
        <position position="112"/>
    </location>
    <ligand>
        <name>3-methyl-2-oxobutanoate</name>
        <dbReference type="ChEBI" id="CHEBI:11851"/>
    </ligand>
</feature>
<feature type="binding site" evidence="1">
    <location>
        <position position="114"/>
    </location>
    <ligand>
        <name>Mg(2+)</name>
        <dbReference type="ChEBI" id="CHEBI:18420"/>
    </ligand>
</feature>
<gene>
    <name evidence="1" type="primary">panB</name>
    <name type="ordered locus">STM0182</name>
</gene>
<reference key="1">
    <citation type="journal article" date="2001" name="Nature">
        <title>Complete genome sequence of Salmonella enterica serovar Typhimurium LT2.</title>
        <authorList>
            <person name="McClelland M."/>
            <person name="Sanderson K.E."/>
            <person name="Spieth J."/>
            <person name="Clifton S.W."/>
            <person name="Latreille P."/>
            <person name="Courtney L."/>
            <person name="Porwollik S."/>
            <person name="Ali J."/>
            <person name="Dante M."/>
            <person name="Du F."/>
            <person name="Hou S."/>
            <person name="Layman D."/>
            <person name="Leonard S."/>
            <person name="Nguyen C."/>
            <person name="Scott K."/>
            <person name="Holmes A."/>
            <person name="Grewal N."/>
            <person name="Mulvaney E."/>
            <person name="Ryan E."/>
            <person name="Sun H."/>
            <person name="Florea L."/>
            <person name="Miller W."/>
            <person name="Stoneking T."/>
            <person name="Nhan M."/>
            <person name="Waterston R."/>
            <person name="Wilson R.K."/>
        </authorList>
    </citation>
    <scope>NUCLEOTIDE SEQUENCE [LARGE SCALE GENOMIC DNA]</scope>
    <source>
        <strain>LT2 / SGSC1412 / ATCC 700720</strain>
    </source>
</reference>
<name>PANB_SALTY</name>
<protein>
    <recommendedName>
        <fullName evidence="1">3-methyl-2-oxobutanoate hydroxymethyltransferase</fullName>
        <ecNumber evidence="1">2.1.2.11</ecNumber>
    </recommendedName>
    <alternativeName>
        <fullName evidence="1">Ketopantoate hydroxymethyltransferase</fullName>
        <shortName evidence="1">KPHMT</shortName>
    </alternativeName>
</protein>